<feature type="chain" id="PRO_0000275966" description="Photosystem I P700 chlorophyll a apoprotein A1">
    <location>
        <begin position="1"/>
        <end position="751"/>
    </location>
</feature>
<feature type="transmembrane region" description="Helical; Name=I" evidence="1">
    <location>
        <begin position="73"/>
        <end position="96"/>
    </location>
</feature>
<feature type="transmembrane region" description="Helical; Name=II" evidence="1">
    <location>
        <begin position="159"/>
        <end position="182"/>
    </location>
</feature>
<feature type="transmembrane region" description="Helical; Name=III" evidence="1">
    <location>
        <begin position="198"/>
        <end position="222"/>
    </location>
</feature>
<feature type="transmembrane region" description="Helical; Name=IV" evidence="1">
    <location>
        <begin position="294"/>
        <end position="312"/>
    </location>
</feature>
<feature type="transmembrane region" description="Helical; Name=V" evidence="1">
    <location>
        <begin position="349"/>
        <end position="372"/>
    </location>
</feature>
<feature type="transmembrane region" description="Helical; Name=VI" evidence="1">
    <location>
        <begin position="388"/>
        <end position="414"/>
    </location>
</feature>
<feature type="transmembrane region" description="Helical; Name=VII" evidence="1">
    <location>
        <begin position="436"/>
        <end position="458"/>
    </location>
</feature>
<feature type="transmembrane region" description="Helical; Name=VIII" evidence="1">
    <location>
        <begin position="533"/>
        <end position="551"/>
    </location>
</feature>
<feature type="transmembrane region" description="Helical; Name=IX" evidence="1">
    <location>
        <begin position="591"/>
        <end position="612"/>
    </location>
</feature>
<feature type="transmembrane region" description="Helical; Name=X" evidence="1">
    <location>
        <begin position="665"/>
        <end position="687"/>
    </location>
</feature>
<feature type="transmembrane region" description="Helical; Name=XI" evidence="1">
    <location>
        <begin position="725"/>
        <end position="745"/>
    </location>
</feature>
<feature type="binding site" evidence="1">
    <location>
        <position position="575"/>
    </location>
    <ligand>
        <name>[4Fe-4S] cluster</name>
        <dbReference type="ChEBI" id="CHEBI:49883"/>
        <note>ligand shared between dimeric partners</note>
    </ligand>
</feature>
<feature type="binding site" evidence="1">
    <location>
        <position position="584"/>
    </location>
    <ligand>
        <name>[4Fe-4S] cluster</name>
        <dbReference type="ChEBI" id="CHEBI:49883"/>
        <note>ligand shared between dimeric partners</note>
    </ligand>
</feature>
<feature type="binding site" description="axial binding residue" evidence="1">
    <location>
        <position position="676"/>
    </location>
    <ligand>
        <name>chlorophyll a'</name>
        <dbReference type="ChEBI" id="CHEBI:189419"/>
        <label>A1</label>
    </ligand>
    <ligandPart>
        <name>Mg</name>
        <dbReference type="ChEBI" id="CHEBI:25107"/>
    </ligandPart>
</feature>
<feature type="binding site" description="axial binding residue" evidence="1">
    <location>
        <position position="683"/>
    </location>
    <ligand>
        <name>chlorophyll a</name>
        <dbReference type="ChEBI" id="CHEBI:58416"/>
        <label>A3</label>
    </ligand>
    <ligandPart>
        <name>Mg</name>
        <dbReference type="ChEBI" id="CHEBI:25107"/>
    </ligandPart>
</feature>
<feature type="binding site" evidence="1">
    <location>
        <position position="692"/>
    </location>
    <ligand>
        <name>chlorophyll a</name>
        <dbReference type="ChEBI" id="CHEBI:58416"/>
        <label>A3</label>
    </ligand>
</feature>
<feature type="binding site" evidence="1">
    <location>
        <position position="693"/>
    </location>
    <ligand>
        <name>phylloquinone</name>
        <dbReference type="ChEBI" id="CHEBI:18067"/>
        <label>A</label>
    </ligand>
</feature>
<protein>
    <recommendedName>
        <fullName evidence="1">Photosystem I P700 chlorophyll a apoprotein A1</fullName>
        <ecNumber evidence="1">1.97.1.12</ecNumber>
    </recommendedName>
    <alternativeName>
        <fullName evidence="1">PSI-A</fullName>
    </alternativeName>
    <alternativeName>
        <fullName evidence="1">PsaA</fullName>
    </alternativeName>
</protein>
<keyword id="KW-0004">4Fe-4S</keyword>
<keyword id="KW-0148">Chlorophyll</keyword>
<keyword id="KW-0150">Chloroplast</keyword>
<keyword id="KW-0157">Chromophore</keyword>
<keyword id="KW-0249">Electron transport</keyword>
<keyword id="KW-0408">Iron</keyword>
<keyword id="KW-0411">Iron-sulfur</keyword>
<keyword id="KW-0460">Magnesium</keyword>
<keyword id="KW-0472">Membrane</keyword>
<keyword id="KW-0479">Metal-binding</keyword>
<keyword id="KW-0560">Oxidoreductase</keyword>
<keyword id="KW-0602">Photosynthesis</keyword>
<keyword id="KW-0603">Photosystem I</keyword>
<keyword id="KW-0934">Plastid</keyword>
<keyword id="KW-0793">Thylakoid</keyword>
<keyword id="KW-0812">Transmembrane</keyword>
<keyword id="KW-1133">Transmembrane helix</keyword>
<keyword id="KW-0813">Transport</keyword>
<comment type="function">
    <text>PsaA and PsaB bind P700, the primary electron donor of photosystem I (PSI), as well as the electron acceptors A0, A1 and FX. PSI is a plastocyanin/cytochrome c6-ferredoxin oxidoreductase, converting photonic excitation into a charge separation, which transfers an electron from the donor P700 chlorophyll pair to the spectroscopically characterized acceptors A0, A1, FX, FA and FB in turn. Oxidized P700 is reduced on the lumenal side of the thylakoid membrane by plastocyanin or cytochrome c6.</text>
</comment>
<comment type="catalytic activity">
    <reaction evidence="1">
        <text>reduced [plastocyanin] + hnu + oxidized [2Fe-2S]-[ferredoxin] = oxidized [plastocyanin] + reduced [2Fe-2S]-[ferredoxin]</text>
        <dbReference type="Rhea" id="RHEA:30407"/>
        <dbReference type="Rhea" id="RHEA-COMP:10000"/>
        <dbReference type="Rhea" id="RHEA-COMP:10001"/>
        <dbReference type="Rhea" id="RHEA-COMP:10039"/>
        <dbReference type="Rhea" id="RHEA-COMP:10040"/>
        <dbReference type="ChEBI" id="CHEBI:29036"/>
        <dbReference type="ChEBI" id="CHEBI:30212"/>
        <dbReference type="ChEBI" id="CHEBI:33737"/>
        <dbReference type="ChEBI" id="CHEBI:33738"/>
        <dbReference type="ChEBI" id="CHEBI:49552"/>
        <dbReference type="EC" id="1.97.1.12"/>
    </reaction>
</comment>
<comment type="cofactor">
    <text evidence="1">P700 is a chlorophyll a/chlorophyll a' dimer, A0 is one or more chlorophyll a, A1 is one or both phylloquinones and FX is a shared 4Fe-4S iron-sulfur center.</text>
</comment>
<comment type="subunit">
    <text evidence="1">The PsaA/B heterodimer binds the P700 chlorophyll special pair and subsequent electron acceptors. PSI consists of a core antenna complex that captures photons, and an electron transfer chain that converts photonic excitation into a charge separation. The eukaryotic PSI reaction center is composed of at least 11 subunits.</text>
</comment>
<comment type="subcellular location">
    <subcellularLocation>
        <location evidence="1">Plastid</location>
        <location evidence="1">Chloroplast thylakoid membrane</location>
        <topology evidence="1">Multi-pass membrane protein</topology>
    </subcellularLocation>
</comment>
<comment type="similarity">
    <text evidence="1">Belongs to the PsaA/PsaB family.</text>
</comment>
<organism>
    <name type="scientific">Stigeoclonium helveticum</name>
    <name type="common">Green alga</name>
    <dbReference type="NCBI Taxonomy" id="55999"/>
    <lineage>
        <taxon>Eukaryota</taxon>
        <taxon>Viridiplantae</taxon>
        <taxon>Chlorophyta</taxon>
        <taxon>core chlorophytes</taxon>
        <taxon>Chlorophyceae</taxon>
        <taxon>OCC clade</taxon>
        <taxon>Chaetophorales</taxon>
        <taxon>Chaetophoraceae</taxon>
        <taxon>Stigeoclonium</taxon>
    </lineage>
</organism>
<reference key="1">
    <citation type="journal article" date="2006" name="Mol. Genet. Genomics">
        <title>Distinctive architecture of the chloroplast genome in the chlorophycean green alga Stigeoclonium helveticum.</title>
        <authorList>
            <person name="Belanger A.-S."/>
            <person name="Brouard J.-S."/>
            <person name="Charlebois P."/>
            <person name="Otis C."/>
            <person name="Lemieux C."/>
            <person name="Turmel M."/>
        </authorList>
    </citation>
    <scope>NUCLEOTIDE SEQUENCE [LARGE SCALE GENOMIC DNA]</scope>
    <source>
        <strain>UTEX 441</strain>
    </source>
</reference>
<proteinExistence type="inferred from homology"/>
<sequence>MTINLPEKEAKRVQIAVDRNPVETSFQKWAKPGHFSRTLAKGPNTTTWIWNLHADAHDFDSHTSDLQDISRKVFSAHFGQLGIILIWLSGMYFHGARFSNYEAWLSDPTHIKPSAQIVWPIVGQEILNGDVGGGFQGVQITSGFFQLWRASGITSELQLYTTAVVGLVLAGAMFFAGWFHYHKAAPKLEWFQNVESMLNHHLGGLLGLGSLGWAGHQIHVSLPVNKLLDAGVDPKEIPLPHEFFLNKQLMIDLYPSFAKGLTPFFTLQWSEYSDFLTFKGGLNEVTGGLNLSDTAHHHLAIAVLFLIAGHMYRTNWGIGHSIKEILDAHKGPLTGEGHKGLYEILTTSWHAQLAINLALFGSLSIVVAHHMYSMPPYPYLATDYATQLSLFTHHCWIGGFCIVGAGAHAAIFMVRDYDPTNNYNNLLDRVLRHRDAIISHLNWVSIFLGFHSFGLYIHNDTMSALGRPQDMFSDTAIQLQPVFAQWVQNTHFMAPQLTAPNALAATSATWGGDVVAVGGKVAMMPISLGTADFMVHHIHAFTIHVTVLILLKGVLFARSSRLIPDKANLGFRFPCDGPGRGGTCQVSAWDHVFLGLFWMYNSLSIVIFHFSWKMQSDVFGTVVNNTVSHITAGNFAQSANTINGWLRDFLWSQSSQVIQSYGSALSAYGLIFLGAHFILLTGMLDIFSGRGYWQELIESILWSHAKLKVAPTIQPRALSITQGRAVGVAHYLLGGIATTWSFFLARIIAVG</sequence>
<gene>
    <name evidence="1" type="primary">psaA</name>
</gene>
<accession>Q06SE0</accession>
<dbReference type="EC" id="1.97.1.12" evidence="1"/>
<dbReference type="EMBL" id="DQ630521">
    <property type="protein sequence ID" value="ABF60162.1"/>
    <property type="molecule type" value="Genomic_DNA"/>
</dbReference>
<dbReference type="RefSeq" id="YP_764426.1">
    <property type="nucleotide sequence ID" value="NC_008372.1"/>
</dbReference>
<dbReference type="SMR" id="Q06SE0"/>
<dbReference type="GeneID" id="4308405"/>
<dbReference type="GO" id="GO:0009535">
    <property type="term" value="C:chloroplast thylakoid membrane"/>
    <property type="evidence" value="ECO:0007669"/>
    <property type="project" value="UniProtKB-SubCell"/>
</dbReference>
<dbReference type="GO" id="GO:0009522">
    <property type="term" value="C:photosystem I"/>
    <property type="evidence" value="ECO:0007669"/>
    <property type="project" value="UniProtKB-KW"/>
</dbReference>
<dbReference type="GO" id="GO:0051539">
    <property type="term" value="F:4 iron, 4 sulfur cluster binding"/>
    <property type="evidence" value="ECO:0007669"/>
    <property type="project" value="UniProtKB-KW"/>
</dbReference>
<dbReference type="GO" id="GO:0016168">
    <property type="term" value="F:chlorophyll binding"/>
    <property type="evidence" value="ECO:0007669"/>
    <property type="project" value="UniProtKB-KW"/>
</dbReference>
<dbReference type="GO" id="GO:0009055">
    <property type="term" value="F:electron transfer activity"/>
    <property type="evidence" value="ECO:0007669"/>
    <property type="project" value="UniProtKB-UniRule"/>
</dbReference>
<dbReference type="GO" id="GO:0000287">
    <property type="term" value="F:magnesium ion binding"/>
    <property type="evidence" value="ECO:0007669"/>
    <property type="project" value="UniProtKB-UniRule"/>
</dbReference>
<dbReference type="GO" id="GO:0016491">
    <property type="term" value="F:oxidoreductase activity"/>
    <property type="evidence" value="ECO:0007669"/>
    <property type="project" value="UniProtKB-KW"/>
</dbReference>
<dbReference type="GO" id="GO:0015979">
    <property type="term" value="P:photosynthesis"/>
    <property type="evidence" value="ECO:0007669"/>
    <property type="project" value="UniProtKB-UniRule"/>
</dbReference>
<dbReference type="Gene3D" id="1.20.1130.10">
    <property type="entry name" value="Photosystem I PsaA/PsaB"/>
    <property type="match status" value="1"/>
</dbReference>
<dbReference type="HAMAP" id="MF_00458">
    <property type="entry name" value="PSI_PsaA"/>
    <property type="match status" value="1"/>
</dbReference>
<dbReference type="InterPro" id="IPR006243">
    <property type="entry name" value="PSI_PsaA"/>
</dbReference>
<dbReference type="InterPro" id="IPR001280">
    <property type="entry name" value="PSI_PsaA/B"/>
</dbReference>
<dbReference type="InterPro" id="IPR020586">
    <property type="entry name" value="PSI_PsaA/B_CS"/>
</dbReference>
<dbReference type="InterPro" id="IPR036408">
    <property type="entry name" value="PSI_PsaA/B_sf"/>
</dbReference>
<dbReference type="NCBIfam" id="TIGR01335">
    <property type="entry name" value="psaA"/>
    <property type="match status" value="1"/>
</dbReference>
<dbReference type="PANTHER" id="PTHR30128">
    <property type="entry name" value="OUTER MEMBRANE PROTEIN, OMPA-RELATED"/>
    <property type="match status" value="1"/>
</dbReference>
<dbReference type="PANTHER" id="PTHR30128:SF19">
    <property type="entry name" value="PHOTOSYSTEM I P700 CHLOROPHYLL A APOPROTEIN A1-RELATED"/>
    <property type="match status" value="1"/>
</dbReference>
<dbReference type="Pfam" id="PF00223">
    <property type="entry name" value="PsaA_PsaB"/>
    <property type="match status" value="1"/>
</dbReference>
<dbReference type="PIRSF" id="PIRSF002905">
    <property type="entry name" value="PSI_A"/>
    <property type="match status" value="1"/>
</dbReference>
<dbReference type="PRINTS" id="PR00257">
    <property type="entry name" value="PHOTSYSPSAAB"/>
</dbReference>
<dbReference type="SUPFAM" id="SSF81558">
    <property type="entry name" value="Photosystem I subunits PsaA/PsaB"/>
    <property type="match status" value="1"/>
</dbReference>
<dbReference type="PROSITE" id="PS00419">
    <property type="entry name" value="PHOTOSYSTEM_I_PSAAB"/>
    <property type="match status" value="1"/>
</dbReference>
<geneLocation type="chloroplast"/>
<evidence type="ECO:0000255" key="1">
    <source>
        <dbReference type="HAMAP-Rule" id="MF_00458"/>
    </source>
</evidence>
<name>PSAA_STIHE</name>